<protein>
    <recommendedName>
        <fullName evidence="1">DNA-directed RNA polymerase subunit alpha</fullName>
        <shortName evidence="1">RNAP subunit alpha</shortName>
        <ecNumber evidence="1">2.7.7.6</ecNumber>
    </recommendedName>
    <alternativeName>
        <fullName evidence="1">RNA polymerase subunit alpha</fullName>
    </alternativeName>
    <alternativeName>
        <fullName evidence="1">Transcriptase subunit alpha</fullName>
    </alternativeName>
</protein>
<organism>
    <name type="scientific">Helicobacter pylori (strain J99 / ATCC 700824)</name>
    <name type="common">Campylobacter pylori J99</name>
    <dbReference type="NCBI Taxonomy" id="85963"/>
    <lineage>
        <taxon>Bacteria</taxon>
        <taxon>Pseudomonadati</taxon>
        <taxon>Campylobacterota</taxon>
        <taxon>Epsilonproteobacteria</taxon>
        <taxon>Campylobacterales</taxon>
        <taxon>Helicobacteraceae</taxon>
        <taxon>Helicobacter</taxon>
    </lineage>
</organism>
<comment type="function">
    <text evidence="1">DNA-dependent RNA polymerase catalyzes the transcription of DNA into RNA using the four ribonucleoside triphosphates as substrates.</text>
</comment>
<comment type="catalytic activity">
    <reaction evidence="1">
        <text>RNA(n) + a ribonucleoside 5'-triphosphate = RNA(n+1) + diphosphate</text>
        <dbReference type="Rhea" id="RHEA:21248"/>
        <dbReference type="Rhea" id="RHEA-COMP:14527"/>
        <dbReference type="Rhea" id="RHEA-COMP:17342"/>
        <dbReference type="ChEBI" id="CHEBI:33019"/>
        <dbReference type="ChEBI" id="CHEBI:61557"/>
        <dbReference type="ChEBI" id="CHEBI:140395"/>
        <dbReference type="EC" id="2.7.7.6"/>
    </reaction>
</comment>
<comment type="subunit">
    <text evidence="1">Homodimer. The RNAP catalytic core consists of 2 alpha, 1 beta, 1 beta' and 1 omega subunit. When a sigma factor is associated with the core the holoenzyme is formed, which can initiate transcription.</text>
</comment>
<comment type="domain">
    <text evidence="1">The N-terminal domain is essential for RNAP assembly and basal transcription, whereas the C-terminal domain is involved in interaction with transcriptional regulators and with upstream promoter elements.</text>
</comment>
<comment type="similarity">
    <text evidence="1">Belongs to the RNA polymerase alpha chain family.</text>
</comment>
<sequence length="344" mass="38480">MKVIKTAPLIPSEIKVLEKEGNRVKISLAPFEFGYAVTLAHPIRRLLLLSSVGYAPVGLKIEGVHHEFDSLRGVTEDVSLFIMNLKNIRFIAKALVGQDSSLENQSVVVDYSFKGPMELRARDLNSDHIEIVNPEMPLATINEDAQLNFSLIIYKGMGYVPSENTRELMPEGYMPLDGSFTPIKNVVYEIENVLVEGDPNYEKIIFDIETDGQIDPYKAFLSAVKVMSKQLGVFGERPIANTEYSGDYAQRDDAKDLSAKIESMNLSARCFNCLDKIGIKYVGELVLMSEEELKGVKNMGKKSYDEIAEKLNDLGYPVGTELSPEQRESLKKRLEKLEDKGGND</sequence>
<gene>
    <name evidence="1" type="primary">rpoA</name>
    <name type="ordered locus">jhp_1213</name>
</gene>
<feature type="chain" id="PRO_0000175317" description="DNA-directed RNA polymerase subunit alpha">
    <location>
        <begin position="1"/>
        <end position="344"/>
    </location>
</feature>
<feature type="region of interest" description="Alpha N-terminal domain (alpha-NTD)" evidence="1">
    <location>
        <begin position="1"/>
        <end position="238"/>
    </location>
</feature>
<feature type="region of interest" description="Alpha C-terminal domain (alpha-CTD)" evidence="1">
    <location>
        <begin position="254"/>
        <end position="344"/>
    </location>
</feature>
<feature type="helix" evidence="2">
    <location>
        <begin position="252"/>
        <end position="258"/>
    </location>
</feature>
<feature type="helix" evidence="2">
    <location>
        <begin position="261"/>
        <end position="264"/>
    </location>
</feature>
<feature type="helix" evidence="2">
    <location>
        <begin position="268"/>
        <end position="277"/>
    </location>
</feature>
<feature type="helix" evidence="2">
    <location>
        <begin position="282"/>
        <end position="287"/>
    </location>
</feature>
<feature type="helix" evidence="2">
    <location>
        <begin position="290"/>
        <end position="293"/>
    </location>
</feature>
<feature type="strand" evidence="2">
    <location>
        <begin position="296"/>
        <end position="298"/>
    </location>
</feature>
<feature type="helix" evidence="2">
    <location>
        <begin position="301"/>
        <end position="313"/>
    </location>
</feature>
<feature type="helix" evidence="2">
    <location>
        <begin position="327"/>
        <end position="334"/>
    </location>
</feature>
<accession>Q9ZJT5</accession>
<keyword id="KW-0002">3D-structure</keyword>
<keyword id="KW-0240">DNA-directed RNA polymerase</keyword>
<keyword id="KW-0548">Nucleotidyltransferase</keyword>
<keyword id="KW-0804">Transcription</keyword>
<keyword id="KW-0808">Transferase</keyword>
<dbReference type="EC" id="2.7.7.6" evidence="1"/>
<dbReference type="EMBL" id="AE001439">
    <property type="protein sequence ID" value="AAD06815.1"/>
    <property type="molecule type" value="Genomic_DNA"/>
</dbReference>
<dbReference type="PIR" id="E71832">
    <property type="entry name" value="E71832"/>
</dbReference>
<dbReference type="RefSeq" id="WP_000864517.1">
    <property type="nucleotide sequence ID" value="NC_000921.1"/>
</dbReference>
<dbReference type="PDB" id="2MAX">
    <property type="method" value="NMR"/>
    <property type="chains" value="A=231-344"/>
</dbReference>
<dbReference type="PDBsum" id="2MAX"/>
<dbReference type="BMRB" id="Q9ZJT5"/>
<dbReference type="SMR" id="Q9ZJT5"/>
<dbReference type="KEGG" id="hpj:jhp_1213"/>
<dbReference type="PATRIC" id="fig|85963.30.peg.1358"/>
<dbReference type="eggNOG" id="COG0202">
    <property type="taxonomic scope" value="Bacteria"/>
</dbReference>
<dbReference type="EvolutionaryTrace" id="Q9ZJT5"/>
<dbReference type="Proteomes" id="UP000000804">
    <property type="component" value="Chromosome"/>
</dbReference>
<dbReference type="GO" id="GO:0005737">
    <property type="term" value="C:cytoplasm"/>
    <property type="evidence" value="ECO:0007669"/>
    <property type="project" value="UniProtKB-ARBA"/>
</dbReference>
<dbReference type="GO" id="GO:0000428">
    <property type="term" value="C:DNA-directed RNA polymerase complex"/>
    <property type="evidence" value="ECO:0007669"/>
    <property type="project" value="UniProtKB-KW"/>
</dbReference>
<dbReference type="GO" id="GO:0003677">
    <property type="term" value="F:DNA binding"/>
    <property type="evidence" value="ECO:0007669"/>
    <property type="project" value="UniProtKB-UniRule"/>
</dbReference>
<dbReference type="GO" id="GO:0003899">
    <property type="term" value="F:DNA-directed RNA polymerase activity"/>
    <property type="evidence" value="ECO:0007669"/>
    <property type="project" value="UniProtKB-UniRule"/>
</dbReference>
<dbReference type="GO" id="GO:0046983">
    <property type="term" value="F:protein dimerization activity"/>
    <property type="evidence" value="ECO:0007669"/>
    <property type="project" value="InterPro"/>
</dbReference>
<dbReference type="GO" id="GO:0006351">
    <property type="term" value="P:DNA-templated transcription"/>
    <property type="evidence" value="ECO:0007669"/>
    <property type="project" value="UniProtKB-UniRule"/>
</dbReference>
<dbReference type="CDD" id="cd06928">
    <property type="entry name" value="RNAP_alpha_NTD"/>
    <property type="match status" value="1"/>
</dbReference>
<dbReference type="FunFam" id="1.10.150.20:FF:000122">
    <property type="entry name" value="DNA-directed RNA polymerase subunit alpha"/>
    <property type="match status" value="1"/>
</dbReference>
<dbReference type="FunFam" id="2.170.120.12:FF:000015">
    <property type="entry name" value="DNA-directed RNA polymerase subunit alpha"/>
    <property type="match status" value="1"/>
</dbReference>
<dbReference type="Gene3D" id="1.10.150.20">
    <property type="entry name" value="5' to 3' exonuclease, C-terminal subdomain"/>
    <property type="match status" value="1"/>
</dbReference>
<dbReference type="Gene3D" id="2.170.120.12">
    <property type="entry name" value="DNA-directed RNA polymerase, insert domain"/>
    <property type="match status" value="1"/>
</dbReference>
<dbReference type="Gene3D" id="3.30.1360.10">
    <property type="entry name" value="RNA polymerase, RBP11-like subunit"/>
    <property type="match status" value="1"/>
</dbReference>
<dbReference type="HAMAP" id="MF_00059">
    <property type="entry name" value="RNApol_bact_RpoA"/>
    <property type="match status" value="1"/>
</dbReference>
<dbReference type="InterPro" id="IPR011262">
    <property type="entry name" value="DNA-dir_RNA_pol_insert"/>
</dbReference>
<dbReference type="InterPro" id="IPR011263">
    <property type="entry name" value="DNA-dir_RNA_pol_RpoA/D/Rpb3"/>
</dbReference>
<dbReference type="InterPro" id="IPR011773">
    <property type="entry name" value="DNA-dir_RpoA"/>
</dbReference>
<dbReference type="InterPro" id="IPR036603">
    <property type="entry name" value="RBP11-like"/>
</dbReference>
<dbReference type="InterPro" id="IPR011260">
    <property type="entry name" value="RNAP_asu_C"/>
</dbReference>
<dbReference type="InterPro" id="IPR036643">
    <property type="entry name" value="RNApol_insert_sf"/>
</dbReference>
<dbReference type="NCBIfam" id="NF003517">
    <property type="entry name" value="PRK05182.2-3"/>
    <property type="match status" value="1"/>
</dbReference>
<dbReference type="NCBIfam" id="TIGR02027">
    <property type="entry name" value="rpoA"/>
    <property type="match status" value="1"/>
</dbReference>
<dbReference type="Pfam" id="PF01000">
    <property type="entry name" value="RNA_pol_A_bac"/>
    <property type="match status" value="1"/>
</dbReference>
<dbReference type="Pfam" id="PF03118">
    <property type="entry name" value="RNA_pol_A_CTD"/>
    <property type="match status" value="1"/>
</dbReference>
<dbReference type="Pfam" id="PF01193">
    <property type="entry name" value="RNA_pol_L"/>
    <property type="match status" value="1"/>
</dbReference>
<dbReference type="SMART" id="SM00662">
    <property type="entry name" value="RPOLD"/>
    <property type="match status" value="1"/>
</dbReference>
<dbReference type="SUPFAM" id="SSF47789">
    <property type="entry name" value="C-terminal domain of RNA polymerase alpha subunit"/>
    <property type="match status" value="1"/>
</dbReference>
<dbReference type="SUPFAM" id="SSF56553">
    <property type="entry name" value="Insert subdomain of RNA polymerase alpha subunit"/>
    <property type="match status" value="1"/>
</dbReference>
<dbReference type="SUPFAM" id="SSF55257">
    <property type="entry name" value="RBP11-like subunits of RNA polymerase"/>
    <property type="match status" value="1"/>
</dbReference>
<evidence type="ECO:0000255" key="1">
    <source>
        <dbReference type="HAMAP-Rule" id="MF_00059"/>
    </source>
</evidence>
<evidence type="ECO:0007829" key="2">
    <source>
        <dbReference type="PDB" id="2MAX"/>
    </source>
</evidence>
<name>RPOA_HELPJ</name>
<proteinExistence type="evidence at protein level"/>
<reference key="1">
    <citation type="journal article" date="1999" name="Nature">
        <title>Genomic sequence comparison of two unrelated isolates of the human gastric pathogen Helicobacter pylori.</title>
        <authorList>
            <person name="Alm R.A."/>
            <person name="Ling L.-S.L."/>
            <person name="Moir D.T."/>
            <person name="King B.L."/>
            <person name="Brown E.D."/>
            <person name="Doig P.C."/>
            <person name="Smith D.R."/>
            <person name="Noonan B."/>
            <person name="Guild B.C."/>
            <person name="deJonge B.L."/>
            <person name="Carmel G."/>
            <person name="Tummino P.J."/>
            <person name="Caruso A."/>
            <person name="Uria-Nickelsen M."/>
            <person name="Mills D.M."/>
            <person name="Ives C."/>
            <person name="Gibson R."/>
            <person name="Merberg D."/>
            <person name="Mills S.D."/>
            <person name="Jiang Q."/>
            <person name="Taylor D.E."/>
            <person name="Vovis G.F."/>
            <person name="Trust T.J."/>
        </authorList>
    </citation>
    <scope>NUCLEOTIDE SEQUENCE [LARGE SCALE GENOMIC DNA]</scope>
    <source>
        <strain>J99 / ATCC 700824</strain>
    </source>
</reference>